<sequence length="473" mass="50851">MKRASSGGSRLLAWVLWLQAWRVATPCPGACVCYNEPKVTTSCPQQGLQAVPTGIPASSQRIFLHGNRISYVPAASFQSCRNLTILWLHSNALAGIDAAAFTGLTLLEQLDLSDNAQLRVVDPTTFRGLGHLHTLHLDRCGLQELGPGLFRGLAALQYLYLQDNNLQALPDNTFRDLGNLTHLFLHGNRIPSVPEHAFRGLHSLDRLLLHQNHVARVHPHAFRDLGRLMTLYLFANNLSMLPAEVLVPLRSLQYLRLNDNPWVCDCRARPLWAWLQKFRGSSSEVPCNLPQRLAGRDLKRLAASDLEGCAVASGPFRPFQTNQLTDEELLGLPKCCQPDAADKASVLEPGRPASAGNALKGRVPPGDTPPGNGSGPRHINDSPFGTLPGSAEPPLTALRPGGSEPPGLPTTGPRRRPGCSRKNRTRSHCRLGQAGSGSSGTGDAEGSGALPALACSLAPLGLALVLWTVLGPC</sequence>
<evidence type="ECO:0000250" key="1">
    <source>
        <dbReference type="UniProtKB" id="Q99PI8"/>
    </source>
</evidence>
<evidence type="ECO:0000250" key="2">
    <source>
        <dbReference type="UniProtKB" id="Q9BZR6"/>
    </source>
</evidence>
<evidence type="ECO:0000255" key="3"/>
<evidence type="ECO:0000256" key="4">
    <source>
        <dbReference type="SAM" id="MobiDB-lite"/>
    </source>
</evidence>
<evidence type="ECO:0000269" key="5">
    <source>
    </source>
</evidence>
<evidence type="ECO:0000269" key="6">
    <source>
    </source>
</evidence>
<evidence type="ECO:0000269" key="7">
    <source>
    </source>
</evidence>
<evidence type="ECO:0000269" key="8">
    <source>
    </source>
</evidence>
<evidence type="ECO:0000269" key="9">
    <source>
    </source>
</evidence>
<evidence type="ECO:0000269" key="10">
    <source>
    </source>
</evidence>
<evidence type="ECO:0000269" key="11">
    <source>
    </source>
</evidence>
<evidence type="ECO:0000269" key="12">
    <source>
    </source>
</evidence>
<evidence type="ECO:0000305" key="13"/>
<evidence type="ECO:0007744" key="14">
    <source>
        <dbReference type="PDB" id="3KJ4"/>
    </source>
</evidence>
<evidence type="ECO:0007829" key="15">
    <source>
        <dbReference type="PDB" id="3KJ4"/>
    </source>
</evidence>
<comment type="function">
    <text evidence="1 2 5 7 8 11 12">Receptor for RTN4, OMG and MAG (PubMed:12037567, PubMed:15673660, PubMed:19420245). Functions as a receptor for the sialylated gangliosides GT1b and GM1. Besides, functions as a receptor for chondroitin sulfate proteoglycans. Can also bind heparin. Intracellular signaling cascades are triggered via the coreceptor NGFR (By similarity). Signaling mediates activation of Rho and downstream reorganization of the actin cytoskeleton (PubMed:18411262). Mediates axonal growth inhibition (PubMed:12037567). May play a role in regulating axon regeneration and neuronal plasticity in the adult central nervous system. Plays a role in postnatal brain development. Required for normal axon migration across the brain midline and normal formation of the corpus callosum (By similarity). Protects motoneurons against apoptosis; protection against apoptosis is probably mediated via interaction with MAG (PubMed:26335717). Acts in conjunction with RTN4 and LINGO1 in regulating neuronal precursor cell motility during cortical development. Like other family members, plays a role in restricting the number dendritic spines and the number of synapses that are formed during brain development (PubMed:22325200).</text>
</comment>
<comment type="subunit">
    <text evidence="1 2 7 9">Homodimer (By similarity). Interacts with MAG (PubMed:15673660, PubMed:19420245). Interacts with RTN4 and OMG (PubMed:15673660, PubMed:19420245). Interacts with LINGO1 and NGFR (By similarity). Interacts with KIAA0319L (By similarity). Interacts with OLFM1; this inhibits interaction with LINGO1 and NGFR (By similarity).</text>
</comment>
<comment type="interaction">
    <interactant intactId="EBI-7370412">
        <id>Q99M75</id>
    </interactant>
    <interactant intactId="EBI-719955">
        <id>Q96FE5</id>
        <label>LINGO1</label>
    </interactant>
    <organismsDiffer>true</organismsDiffer>
    <experiments>2</experiments>
</comment>
<comment type="subcellular location">
    <subcellularLocation>
        <location evidence="7 9 11">Cell membrane</location>
        <topology evidence="1">Lipid-anchor</topology>
        <topology evidence="1">GPI-anchor</topology>
    </subcellularLocation>
    <subcellularLocation>
        <location evidence="7">Membrane raft</location>
    </subcellularLocation>
    <subcellularLocation>
        <location evidence="1">Cell projection</location>
        <location evidence="1">Dendrite</location>
    </subcellularLocation>
    <subcellularLocation>
        <location evidence="7">Perikaryon</location>
    </subcellularLocation>
    <subcellularLocation>
        <location evidence="6">Cell projection</location>
        <location evidence="6">Axon</location>
    </subcellularLocation>
    <text evidence="1">Detected along dendrites and axons, close to synapses, but clearly excluded from synapses.</text>
</comment>
<comment type="tissue specificity">
    <text evidence="7">Detected in embryonic cerebellum, in spinal cord motor neurons and in dorsal root ganglia (PubMed:12426574). Detected in adult brain, in neocortex, hippocampus, striatum, thalamus and dorsal root ganglion neurons (at protein level).</text>
</comment>
<comment type="developmental stage">
    <text evidence="7">Expression is high in adult, but very low in neonate dorsal root ganglion neurons (at protein level).</text>
</comment>
<comment type="PTM">
    <text evidence="9">N-glycosylated. O-glycosylated. Contains terminal sialic acid groups on its glycan chains.</text>
</comment>
<comment type="similarity">
    <text evidence="13">Belongs to the Nogo receptor family.</text>
</comment>
<comment type="online information" name="Protein Spotlight">
    <link uri="https://www.proteinspotlight.org/back_issues/069"/>
    <text>Nerve regrowth: nipped by a no-go - Issue 69 of April 2006</text>
</comment>
<accession>Q99M75</accession>
<reference key="1">
    <citation type="submission" date="2001-03" db="EMBL/GenBank/DDBJ databases">
        <title>Identification and preparation of polyclonal antibody against rat Nogo receptor.</title>
        <authorList>
            <person name="Jin W.-L."/>
            <person name="Jia W."/>
            <person name="Long M."/>
            <person name="Ju G."/>
        </authorList>
    </citation>
    <scope>NUCLEOTIDE SEQUENCE [MRNA]</scope>
    <source>
        <strain>Sprague-Dawley</strain>
    </source>
</reference>
<reference key="2">
    <citation type="submission" date="2001-12" db="EMBL/GenBank/DDBJ databases">
        <title>Nogo-A: a molecule with two active sites and two membrane topologies.</title>
        <authorList>
            <person name="Oertle T."/>
            <person name="van der Haar M.E."/>
            <person name="Bandtlow C.E."/>
            <person name="Huber A.B."/>
            <person name="Simonen M."/>
            <person name="Schnell L."/>
            <person name="Broesamle C."/>
            <person name="Schwab M.E."/>
        </authorList>
    </citation>
    <scope>NUCLEOTIDE SEQUENCE [MRNA]</scope>
</reference>
<reference key="3">
    <citation type="journal article" date="2002" name="J. Neurosci. Res.">
        <title>Nogos and the Nogo-66 receptor: factors inhibiting CNS neuron regeneration.</title>
        <authorList>
            <person name="Ng C.E.L."/>
            <person name="Tang B.L."/>
        </authorList>
    </citation>
    <scope>REVIEW</scope>
</reference>
<reference key="4">
    <citation type="journal article" date="2002" name="Nat. Neurosci.">
        <title>A p75(NTR) and Nogo receptor complex mediates repulsive signaling by myelin-associated glycoprotein.</title>
        <authorList>
            <person name="Wong S.T."/>
            <person name="Henley J.R."/>
            <person name="Kanning K.C."/>
            <person name="Huang K.H."/>
            <person name="Bothwell M."/>
            <person name="Poo M.M."/>
        </authorList>
    </citation>
    <scope>INTERACTION WITH NGFR</scope>
    <scope>TISSUE SPECIFICITY</scope>
    <scope>SUBCELLULAR LOCATION</scope>
</reference>
<reference key="5">
    <citation type="journal article" date="2002" name="Nature">
        <title>Nogo-66 receptor antagonist peptide promotes axonal regeneration.</title>
        <authorList>
            <person name="GrandPre T."/>
            <person name="Li S."/>
            <person name="Strittmatter S.M."/>
        </authorList>
    </citation>
    <scope>FUNCTION</scope>
</reference>
<reference key="6">
    <citation type="journal article" date="2005" name="J. Neurosci.">
        <title>The Nogo-66 receptor homolog NgR2 is a sialic acid-dependent receptor selective for myelin-associated glycoprotein.</title>
        <authorList>
            <person name="Venkatesh K."/>
            <person name="Chivatakarn O."/>
            <person name="Lee H."/>
            <person name="Joshi P.S."/>
            <person name="Kantor D.B."/>
            <person name="Newman B.A."/>
            <person name="Mage R."/>
            <person name="Rader C."/>
            <person name="Giger R.J."/>
        </authorList>
    </citation>
    <scope>FUNCTION</scope>
    <scope>SUBCELLULAR LOCATION</scope>
    <scope>INTERACTION WITH MAG; RTN4 AND OMG</scope>
    <scope>TISSUE SPECIFICITY</scope>
    <scope>DEVELOPMENTAL STAGE</scope>
</reference>
<reference key="7">
    <citation type="journal article" date="2008" name="J. Biol. Chem.">
        <title>Ganglioside inhibition of neurite outgrowth requires Nogo receptor function: identification of interaction sites and development of novel antagonists.</title>
        <authorList>
            <person name="Williams G."/>
            <person name="Wood A."/>
            <person name="Williams E.J."/>
            <person name="Gao Y."/>
            <person name="Mercado M.L."/>
            <person name="Katz A."/>
            <person name="Joseph-McCarthy D."/>
            <person name="Bates B."/>
            <person name="Ling H.P."/>
            <person name="Aulabaugh A."/>
            <person name="Zaccardi J."/>
            <person name="Xie Y."/>
            <person name="Pangalos M.N."/>
            <person name="Walsh F.S."/>
            <person name="Doherty P."/>
        </authorList>
    </citation>
    <scope>FUNCTION</scope>
</reference>
<reference key="8">
    <citation type="journal article" date="2009" name="J. Neurosci.">
        <title>Molecular basis of the interactions of the Nogo-66 receptor and its homolog NgR2 with myelin-associated glycoprotein: development of NgROMNI-Fc, a novel antagonist of CNS myelin inhibition.</title>
        <authorList>
            <person name="Robak L.A."/>
            <person name="Venkatesh K."/>
            <person name="Lee H."/>
            <person name="Raiker S.J."/>
            <person name="Duan Y."/>
            <person name="Lee-Osbourne J."/>
            <person name="Hofer T."/>
            <person name="Mage R.G."/>
            <person name="Rader C."/>
            <person name="Giger R.J."/>
        </authorList>
    </citation>
    <scope>INTERACTION WITH MAG; RTN4 AND OMG</scope>
    <scope>GLYCOSYLATION</scope>
    <scope>SUBCELLULAR LOCATION</scope>
</reference>
<reference key="9">
    <citation type="journal article" date="2012" name="Neuron">
        <title>The Nogo receptor family restricts synapse number in the developing hippocampus.</title>
        <authorList>
            <person name="Wills Z.P."/>
            <person name="Mandel-Brehm C."/>
            <person name="Mardinly A.R."/>
            <person name="McCord A.E."/>
            <person name="Giger R.J."/>
            <person name="Greenberg M.E."/>
        </authorList>
    </citation>
    <scope>FUNCTION</scope>
    <scope>SUBCELLULAR LOCATION</scope>
</reference>
<reference key="10">
    <citation type="journal article" date="2015" name="Cell Death Dis.">
        <title>Myelin-associated glycoprotein modulates apoptosis of motoneurons during early postnatal development via NgR/p75(NTR) receptor-mediated activation of RhoA signaling pathways.</title>
        <authorList>
            <person name="Palandri A."/>
            <person name="Salvador V.R."/>
            <person name="Wojnacki J."/>
            <person name="Vivinetto A.L."/>
            <person name="Schnaar R.L."/>
            <person name="Lopez P.H."/>
        </authorList>
    </citation>
    <scope>FUNCTION</scope>
</reference>
<reference key="11">
    <citation type="journal article" date="2010" name="Biotechnol. Appl. Biochem.">
        <title>Resolution of disulfide heterogeneity in Nogo receptor I fusion proteins by molecular engineering.</title>
        <authorList>
            <person name="Weinreb P.H."/>
            <person name="Wen D."/>
            <person name="Qian F."/>
            <person name="Wildes C.P."/>
            <person name="Garber E.A."/>
            <person name="Walus L."/>
            <person name="Jung M.Y."/>
            <person name="Wang J."/>
            <person name="Relton J.K."/>
            <person name="Amatucci J."/>
            <person name="Wang R."/>
            <person name="Porreca F."/>
            <person name="Silvian L."/>
            <person name="Meier W."/>
            <person name="Pepinsky R.B."/>
            <person name="Lee D.H."/>
        </authorList>
    </citation>
    <scope>X-RAY CRYSTALLOGRAPHY (3.1 ANGSTROMS) OF 27-312</scope>
    <scope>DISULFIDE BONDS</scope>
</reference>
<gene>
    <name type="primary">Rtn4r</name>
    <name type="synonym">Nogor</name>
</gene>
<feature type="signal peptide" evidence="3">
    <location>
        <begin position="1"/>
        <end position="26"/>
    </location>
</feature>
<feature type="chain" id="PRO_0000022259" description="Reticulon-4 receptor">
    <location>
        <begin position="27"/>
        <end position="447"/>
    </location>
</feature>
<feature type="propeptide" id="PRO_0000022260" description="Removed in mature form" evidence="3">
    <location>
        <begin position="448"/>
        <end position="473"/>
    </location>
</feature>
<feature type="domain" description="LRRNT" evidence="3">
    <location>
        <begin position="27"/>
        <end position="57"/>
    </location>
</feature>
<feature type="repeat" description="LRR 1" evidence="3">
    <location>
        <begin position="56"/>
        <end position="79"/>
    </location>
</feature>
<feature type="repeat" description="LRR 2" evidence="3">
    <location>
        <begin position="80"/>
        <end position="103"/>
    </location>
</feature>
<feature type="repeat" description="LRR 3" evidence="3">
    <location>
        <begin position="105"/>
        <end position="128"/>
    </location>
</feature>
<feature type="repeat" description="LRR 4" evidence="3">
    <location>
        <begin position="129"/>
        <end position="152"/>
    </location>
</feature>
<feature type="repeat" description="LRR 5" evidence="3">
    <location>
        <begin position="153"/>
        <end position="176"/>
    </location>
</feature>
<feature type="repeat" description="LRR 6" evidence="3">
    <location>
        <begin position="178"/>
        <end position="200"/>
    </location>
</feature>
<feature type="repeat" description="LRR 7" evidence="3">
    <location>
        <begin position="202"/>
        <end position="224"/>
    </location>
</feature>
<feature type="repeat" description="LRR 8" evidence="3">
    <location>
        <begin position="225"/>
        <end position="248"/>
    </location>
</feature>
<feature type="repeat" description="LRR 9" evidence="3">
    <location>
        <begin position="250"/>
        <end position="273"/>
    </location>
</feature>
<feature type="domain" description="LRRCT" evidence="3">
    <location>
        <begin position="260"/>
        <end position="310"/>
    </location>
</feature>
<feature type="region of interest" description="Disordered" evidence="4">
    <location>
        <begin position="346"/>
        <end position="446"/>
    </location>
</feature>
<feature type="compositionally biased region" description="Basic residues" evidence="4">
    <location>
        <begin position="413"/>
        <end position="429"/>
    </location>
</feature>
<feature type="compositionally biased region" description="Gly residues" evidence="4">
    <location>
        <begin position="434"/>
        <end position="445"/>
    </location>
</feature>
<feature type="lipid moiety-binding region" description="GPI-anchor amidated serine" evidence="3">
    <location>
        <position position="447"/>
    </location>
</feature>
<feature type="glycosylation site" description="N-linked (GlcNAc...) asparagine" evidence="3">
    <location>
        <position position="82"/>
    </location>
</feature>
<feature type="glycosylation site" description="N-linked (GlcNAc...) asparagine" evidence="3">
    <location>
        <position position="372"/>
    </location>
</feature>
<feature type="disulfide bond" evidence="10 14">
    <location>
        <begin position="27"/>
        <end position="33"/>
    </location>
</feature>
<feature type="disulfide bond" evidence="10 14">
    <location>
        <begin position="31"/>
        <end position="43"/>
    </location>
</feature>
<feature type="disulfide bond" evidence="10 14">
    <location>
        <begin position="264"/>
        <end position="287"/>
    </location>
</feature>
<feature type="disulfide bond" evidence="1">
    <location>
        <begin position="266"/>
        <end position="335"/>
    </location>
</feature>
<feature type="disulfide bond" evidence="1">
    <location>
        <begin position="309"/>
        <end position="336"/>
    </location>
</feature>
<feature type="sequence conflict" description="In Ref. 1; AAK20166." evidence="13" ref="1">
    <original>LA</original>
    <variation>PT</variation>
    <location>
        <begin position="12"/>
        <end position="13"/>
    </location>
</feature>
<feature type="sequence conflict" description="In Ref. 1; AAK20166." evidence="13" ref="1">
    <original>C</original>
    <variation>R</variation>
    <location>
        <position position="43"/>
    </location>
</feature>
<feature type="sequence conflict" description="In Ref. 1; AAK20166." evidence="13" ref="1">
    <original>T</original>
    <variation>A</variation>
    <location>
        <position position="53"/>
    </location>
</feature>
<feature type="sequence conflict" description="In Ref. 1; AAK20166." evidence="13" ref="1">
    <original>E</original>
    <variation>G</variation>
    <location>
        <position position="284"/>
    </location>
</feature>
<feature type="sequence conflict" description="In Ref. 1; AAK20166." evidence="13" ref="1">
    <original>C</original>
    <variation>S</variation>
    <location>
        <position position="287"/>
    </location>
</feature>
<feature type="sequence conflict" description="In Ref. 1; AAK20166." evidence="13" ref="1">
    <original>A</original>
    <variation>T</variation>
    <location>
        <position position="303"/>
    </location>
</feature>
<feature type="sequence conflict" description="In Ref. 1; AAK20166." evidence="13" ref="1">
    <original>A</original>
    <variation>V</variation>
    <location>
        <position position="355"/>
    </location>
</feature>
<feature type="strand" evidence="15">
    <location>
        <begin position="32"/>
        <end position="34"/>
    </location>
</feature>
<feature type="strand" evidence="15">
    <location>
        <begin position="36"/>
        <end position="38"/>
    </location>
</feature>
<feature type="strand" evidence="15">
    <location>
        <begin position="40"/>
        <end position="42"/>
    </location>
</feature>
<feature type="strand" evidence="15">
    <location>
        <begin position="60"/>
        <end position="63"/>
    </location>
</feature>
<feature type="strand" evidence="15">
    <location>
        <begin position="85"/>
        <end position="87"/>
    </location>
</feature>
<feature type="strand" evidence="15">
    <location>
        <begin position="94"/>
        <end position="96"/>
    </location>
</feature>
<feature type="turn" evidence="15">
    <location>
        <begin position="98"/>
        <end position="103"/>
    </location>
</feature>
<feature type="strand" evidence="15">
    <location>
        <begin position="109"/>
        <end position="111"/>
    </location>
</feature>
<feature type="turn" evidence="15">
    <location>
        <begin position="123"/>
        <end position="128"/>
    </location>
</feature>
<feature type="strand" evidence="15">
    <location>
        <begin position="134"/>
        <end position="136"/>
    </location>
</feature>
<feature type="turn" evidence="15">
    <location>
        <begin position="147"/>
        <end position="152"/>
    </location>
</feature>
<feature type="strand" evidence="15">
    <location>
        <begin position="158"/>
        <end position="160"/>
    </location>
</feature>
<feature type="turn" evidence="15">
    <location>
        <begin position="171"/>
        <end position="176"/>
    </location>
</feature>
<feature type="strand" evidence="15">
    <location>
        <begin position="182"/>
        <end position="184"/>
    </location>
</feature>
<feature type="turn" evidence="15">
    <location>
        <begin position="195"/>
        <end position="200"/>
    </location>
</feature>
<feature type="strand" evidence="15">
    <location>
        <begin position="206"/>
        <end position="208"/>
    </location>
</feature>
<feature type="turn" evidence="15">
    <location>
        <begin position="219"/>
        <end position="224"/>
    </location>
</feature>
<feature type="strand" evidence="15">
    <location>
        <begin position="230"/>
        <end position="232"/>
    </location>
</feature>
<feature type="strand" evidence="15">
    <location>
        <begin position="254"/>
        <end position="256"/>
    </location>
</feature>
<feature type="helix" evidence="15">
    <location>
        <begin position="268"/>
        <end position="277"/>
    </location>
</feature>
<feature type="helix" evidence="15">
    <location>
        <begin position="291"/>
        <end position="293"/>
    </location>
</feature>
<feature type="helix" evidence="15">
    <location>
        <begin position="298"/>
        <end position="300"/>
    </location>
</feature>
<protein>
    <recommendedName>
        <fullName>Reticulon-4 receptor</fullName>
    </recommendedName>
    <alternativeName>
        <fullName>Nogo receptor</fullName>
        <shortName>NgR</shortName>
    </alternativeName>
    <alternativeName>
        <fullName>Nogo-66 receptor</fullName>
    </alternativeName>
</protein>
<dbReference type="EMBL" id="AY028438">
    <property type="protein sequence ID" value="AAK20166.1"/>
    <property type="molecule type" value="mRNA"/>
</dbReference>
<dbReference type="EMBL" id="AF462390">
    <property type="protein sequence ID" value="AAM46772.1"/>
    <property type="molecule type" value="mRNA"/>
</dbReference>
<dbReference type="RefSeq" id="NP_446065.2">
    <property type="nucleotide sequence ID" value="NM_053613.2"/>
</dbReference>
<dbReference type="PDB" id="3KJ4">
    <property type="method" value="X-ray"/>
    <property type="resolution" value="3.10 A"/>
    <property type="chains" value="A/D=27-312"/>
</dbReference>
<dbReference type="PDBsum" id="3KJ4"/>
<dbReference type="SMR" id="Q99M75"/>
<dbReference type="BioGRID" id="250215">
    <property type="interactions" value="5"/>
</dbReference>
<dbReference type="FunCoup" id="Q99M75">
    <property type="interactions" value="875"/>
</dbReference>
<dbReference type="IntAct" id="Q99M75">
    <property type="interactions" value="1"/>
</dbReference>
<dbReference type="MINT" id="Q99M75"/>
<dbReference type="STRING" id="10116.ENSRNOP00000041517"/>
<dbReference type="GlyCosmos" id="Q99M75">
    <property type="glycosylation" value="2 sites, No reported glycans"/>
</dbReference>
<dbReference type="GlyGen" id="Q99M75">
    <property type="glycosylation" value="3 sites"/>
</dbReference>
<dbReference type="iPTMnet" id="Q99M75"/>
<dbReference type="PhosphoSitePlus" id="Q99M75"/>
<dbReference type="PaxDb" id="10116-ENSRNOP00000041517"/>
<dbReference type="ABCD" id="Q99M75">
    <property type="antibodies" value="2 sequenced antibodies"/>
</dbReference>
<dbReference type="Ensembl" id="ENSRNOT00000051037.6">
    <property type="protein sequence ID" value="ENSRNOP00000041517.5"/>
    <property type="gene ID" value="ENSRNOG00000030920.6"/>
</dbReference>
<dbReference type="GeneID" id="113912"/>
<dbReference type="KEGG" id="rno:113912"/>
<dbReference type="AGR" id="RGD:620810"/>
<dbReference type="CTD" id="65078"/>
<dbReference type="RGD" id="620810">
    <property type="gene designation" value="Rtn4r"/>
</dbReference>
<dbReference type="eggNOG" id="KOG0619">
    <property type="taxonomic scope" value="Eukaryota"/>
</dbReference>
<dbReference type="GeneTree" id="ENSGT00940000160711"/>
<dbReference type="HOGENOM" id="CLU_000288_18_6_1"/>
<dbReference type="InParanoid" id="Q99M75"/>
<dbReference type="OMA" id="RSQCRMA"/>
<dbReference type="OrthoDB" id="546383at2759"/>
<dbReference type="PhylomeDB" id="Q99M75"/>
<dbReference type="TreeFam" id="TF330080"/>
<dbReference type="EvolutionaryTrace" id="Q99M75"/>
<dbReference type="PRO" id="PR:Q99M75"/>
<dbReference type="Proteomes" id="UP000002494">
    <property type="component" value="Chromosome 11"/>
</dbReference>
<dbReference type="Bgee" id="ENSRNOG00000030920">
    <property type="expression patterns" value="Expressed in frontal cortex and 17 other cell types or tissues"/>
</dbReference>
<dbReference type="GO" id="GO:0044295">
    <property type="term" value="C:axonal growth cone"/>
    <property type="evidence" value="ECO:0000250"/>
    <property type="project" value="UniProtKB"/>
</dbReference>
<dbReference type="GO" id="GO:0009986">
    <property type="term" value="C:cell surface"/>
    <property type="evidence" value="ECO:0000314"/>
    <property type="project" value="UniProtKB"/>
</dbReference>
<dbReference type="GO" id="GO:0043198">
    <property type="term" value="C:dendritic shaft"/>
    <property type="evidence" value="ECO:0000250"/>
    <property type="project" value="UniProtKB"/>
</dbReference>
<dbReference type="GO" id="GO:0009897">
    <property type="term" value="C:external side of plasma membrane"/>
    <property type="evidence" value="ECO:0000250"/>
    <property type="project" value="UniProtKB"/>
</dbReference>
<dbReference type="GO" id="GO:0098978">
    <property type="term" value="C:glutamatergic synapse"/>
    <property type="evidence" value="ECO:0000314"/>
    <property type="project" value="SynGO"/>
</dbReference>
<dbReference type="GO" id="GO:0030426">
    <property type="term" value="C:growth cone"/>
    <property type="evidence" value="ECO:0000266"/>
    <property type="project" value="RGD"/>
</dbReference>
<dbReference type="GO" id="GO:0045121">
    <property type="term" value="C:membrane raft"/>
    <property type="evidence" value="ECO:0000314"/>
    <property type="project" value="UniProtKB"/>
</dbReference>
<dbReference type="GO" id="GO:0043005">
    <property type="term" value="C:neuron projection"/>
    <property type="evidence" value="ECO:0000250"/>
    <property type="project" value="UniProtKB"/>
</dbReference>
<dbReference type="GO" id="GO:0043025">
    <property type="term" value="C:neuronal cell body"/>
    <property type="evidence" value="ECO:0000250"/>
    <property type="project" value="UniProtKB"/>
</dbReference>
<dbReference type="GO" id="GO:0043204">
    <property type="term" value="C:perikaryon"/>
    <property type="evidence" value="ECO:0007669"/>
    <property type="project" value="UniProtKB-SubCell"/>
</dbReference>
<dbReference type="GO" id="GO:0005886">
    <property type="term" value="C:plasma membrane"/>
    <property type="evidence" value="ECO:0000250"/>
    <property type="project" value="UniProtKB"/>
</dbReference>
<dbReference type="GO" id="GO:0098793">
    <property type="term" value="C:presynapse"/>
    <property type="evidence" value="ECO:0000314"/>
    <property type="project" value="SynGO"/>
</dbReference>
<dbReference type="GO" id="GO:0035374">
    <property type="term" value="F:chondroitin sulfate binding"/>
    <property type="evidence" value="ECO:0000250"/>
    <property type="project" value="UniProtKB"/>
</dbReference>
<dbReference type="GO" id="GO:1905573">
    <property type="term" value="F:ganglioside GM1 binding"/>
    <property type="evidence" value="ECO:0000250"/>
    <property type="project" value="UniProtKB"/>
</dbReference>
<dbReference type="GO" id="GO:1905576">
    <property type="term" value="F:ganglioside GT1b binding"/>
    <property type="evidence" value="ECO:0000250"/>
    <property type="project" value="UniProtKB"/>
</dbReference>
<dbReference type="GO" id="GO:0008201">
    <property type="term" value="F:heparin binding"/>
    <property type="evidence" value="ECO:0000250"/>
    <property type="project" value="UniProtKB"/>
</dbReference>
<dbReference type="GO" id="GO:0038131">
    <property type="term" value="F:neuregulin receptor activity"/>
    <property type="evidence" value="ECO:0000250"/>
    <property type="project" value="UniProtKB"/>
</dbReference>
<dbReference type="GO" id="GO:0044877">
    <property type="term" value="F:protein-containing complex binding"/>
    <property type="evidence" value="ECO:0000353"/>
    <property type="project" value="RGD"/>
</dbReference>
<dbReference type="GO" id="GO:0048495">
    <property type="term" value="F:Roundabout binding"/>
    <property type="evidence" value="ECO:0000318"/>
    <property type="project" value="GO_Central"/>
</dbReference>
<dbReference type="GO" id="GO:0038023">
    <property type="term" value="F:signaling receptor activity"/>
    <property type="evidence" value="ECO:0000315"/>
    <property type="project" value="UniProtKB"/>
</dbReference>
<dbReference type="GO" id="GO:0007409">
    <property type="term" value="P:axonogenesis"/>
    <property type="evidence" value="ECO:0000266"/>
    <property type="project" value="RGD"/>
</dbReference>
<dbReference type="GO" id="GO:0007166">
    <property type="term" value="P:cell surface receptor signaling pathway"/>
    <property type="evidence" value="ECO:0000315"/>
    <property type="project" value="UniProtKB"/>
</dbReference>
<dbReference type="GO" id="GO:0022038">
    <property type="term" value="P:corpus callosum development"/>
    <property type="evidence" value="ECO:0000250"/>
    <property type="project" value="UniProtKB"/>
</dbReference>
<dbReference type="GO" id="GO:0050919">
    <property type="term" value="P:negative chemotaxis"/>
    <property type="evidence" value="ECO:0000318"/>
    <property type="project" value="GO_Central"/>
</dbReference>
<dbReference type="GO" id="GO:0030517">
    <property type="term" value="P:negative regulation of axon extension"/>
    <property type="evidence" value="ECO:0000250"/>
    <property type="project" value="UniProtKB"/>
</dbReference>
<dbReference type="GO" id="GO:0048681">
    <property type="term" value="P:negative regulation of axon regeneration"/>
    <property type="evidence" value="ECO:0000250"/>
    <property type="project" value="UniProtKB"/>
</dbReference>
<dbReference type="GO" id="GO:0050771">
    <property type="term" value="P:negative regulation of axonogenesis"/>
    <property type="evidence" value="ECO:0000304"/>
    <property type="project" value="RGD"/>
</dbReference>
<dbReference type="GO" id="GO:0010977">
    <property type="term" value="P:negative regulation of neuron projection development"/>
    <property type="evidence" value="ECO:0000315"/>
    <property type="project" value="UniProtKB"/>
</dbReference>
<dbReference type="GO" id="GO:0023041">
    <property type="term" value="P:neuronal signal transduction"/>
    <property type="evidence" value="ECO:0000250"/>
    <property type="project" value="UniProtKB"/>
</dbReference>
<dbReference type="GO" id="GO:0043547">
    <property type="term" value="P:positive regulation of GTPase activity"/>
    <property type="evidence" value="ECO:0000250"/>
    <property type="project" value="UniProtKB"/>
</dbReference>
<dbReference type="GO" id="GO:0035025">
    <property type="term" value="P:positive regulation of Rho protein signal transduction"/>
    <property type="evidence" value="ECO:0000250"/>
    <property type="project" value="UniProtKB"/>
</dbReference>
<dbReference type="GO" id="GO:0150052">
    <property type="term" value="P:regulation of postsynapse assembly"/>
    <property type="evidence" value="ECO:0000266"/>
    <property type="project" value="RGD"/>
</dbReference>
<dbReference type="GO" id="GO:0051963">
    <property type="term" value="P:regulation of synapse assembly"/>
    <property type="evidence" value="ECO:0000266"/>
    <property type="project" value="RGD"/>
</dbReference>
<dbReference type="FunFam" id="3.80.10.10:FF:000018">
    <property type="entry name" value="Reticulon 4 receptor"/>
    <property type="match status" value="1"/>
</dbReference>
<dbReference type="Gene3D" id="3.80.10.10">
    <property type="entry name" value="Ribonuclease Inhibitor"/>
    <property type="match status" value="1"/>
</dbReference>
<dbReference type="InterPro" id="IPR000483">
    <property type="entry name" value="Cys-rich_flank_reg_C"/>
</dbReference>
<dbReference type="InterPro" id="IPR001611">
    <property type="entry name" value="Leu-rich_rpt"/>
</dbReference>
<dbReference type="InterPro" id="IPR003591">
    <property type="entry name" value="Leu-rich_rpt_typical-subtyp"/>
</dbReference>
<dbReference type="InterPro" id="IPR032675">
    <property type="entry name" value="LRR_dom_sf"/>
</dbReference>
<dbReference type="InterPro" id="IPR050541">
    <property type="entry name" value="LRR_TM_domain-containing"/>
</dbReference>
<dbReference type="PANTHER" id="PTHR24369">
    <property type="entry name" value="ANTIGEN BSP, PUTATIVE-RELATED"/>
    <property type="match status" value="1"/>
</dbReference>
<dbReference type="PANTHER" id="PTHR24369:SF174">
    <property type="entry name" value="RETICULON-4 RECEPTOR"/>
    <property type="match status" value="1"/>
</dbReference>
<dbReference type="Pfam" id="PF13855">
    <property type="entry name" value="LRR_8"/>
    <property type="match status" value="2"/>
</dbReference>
<dbReference type="SMART" id="SM00369">
    <property type="entry name" value="LRR_TYP"/>
    <property type="match status" value="8"/>
</dbReference>
<dbReference type="SMART" id="SM00082">
    <property type="entry name" value="LRRCT"/>
    <property type="match status" value="1"/>
</dbReference>
<dbReference type="SUPFAM" id="SSF52058">
    <property type="entry name" value="L domain-like"/>
    <property type="match status" value="1"/>
</dbReference>
<dbReference type="PROSITE" id="PS51450">
    <property type="entry name" value="LRR"/>
    <property type="match status" value="8"/>
</dbReference>
<keyword id="KW-0002">3D-structure</keyword>
<keyword id="KW-1003">Cell membrane</keyword>
<keyword id="KW-0966">Cell projection</keyword>
<keyword id="KW-1015">Disulfide bond</keyword>
<keyword id="KW-0325">Glycoprotein</keyword>
<keyword id="KW-0336">GPI-anchor</keyword>
<keyword id="KW-0433">Leucine-rich repeat</keyword>
<keyword id="KW-0449">Lipoprotein</keyword>
<keyword id="KW-0472">Membrane</keyword>
<keyword id="KW-0675">Receptor</keyword>
<keyword id="KW-1185">Reference proteome</keyword>
<keyword id="KW-0677">Repeat</keyword>
<keyword id="KW-0732">Signal</keyword>
<organism>
    <name type="scientific">Rattus norvegicus</name>
    <name type="common">Rat</name>
    <dbReference type="NCBI Taxonomy" id="10116"/>
    <lineage>
        <taxon>Eukaryota</taxon>
        <taxon>Metazoa</taxon>
        <taxon>Chordata</taxon>
        <taxon>Craniata</taxon>
        <taxon>Vertebrata</taxon>
        <taxon>Euteleostomi</taxon>
        <taxon>Mammalia</taxon>
        <taxon>Eutheria</taxon>
        <taxon>Euarchontoglires</taxon>
        <taxon>Glires</taxon>
        <taxon>Rodentia</taxon>
        <taxon>Myomorpha</taxon>
        <taxon>Muroidea</taxon>
        <taxon>Muridae</taxon>
        <taxon>Murinae</taxon>
        <taxon>Rattus</taxon>
    </lineage>
</organism>
<proteinExistence type="evidence at protein level"/>
<name>RTN4R_RAT</name>